<organism>
    <name type="scientific">Xanthomonas axonopodis pv. citri (strain 306)</name>
    <dbReference type="NCBI Taxonomy" id="190486"/>
    <lineage>
        <taxon>Bacteria</taxon>
        <taxon>Pseudomonadati</taxon>
        <taxon>Pseudomonadota</taxon>
        <taxon>Gammaproteobacteria</taxon>
        <taxon>Lysobacterales</taxon>
        <taxon>Lysobacteraceae</taxon>
        <taxon>Xanthomonas</taxon>
    </lineage>
</organism>
<reference key="1">
    <citation type="journal article" date="2002" name="Nature">
        <title>Comparison of the genomes of two Xanthomonas pathogens with differing host specificities.</title>
        <authorList>
            <person name="da Silva A.C.R."/>
            <person name="Ferro J.A."/>
            <person name="Reinach F.C."/>
            <person name="Farah C.S."/>
            <person name="Furlan L.R."/>
            <person name="Quaggio R.B."/>
            <person name="Monteiro-Vitorello C.B."/>
            <person name="Van Sluys M.A."/>
            <person name="Almeida N.F. Jr."/>
            <person name="Alves L.M.C."/>
            <person name="do Amaral A.M."/>
            <person name="Bertolini M.C."/>
            <person name="Camargo L.E.A."/>
            <person name="Camarotte G."/>
            <person name="Cannavan F."/>
            <person name="Cardozo J."/>
            <person name="Chambergo F."/>
            <person name="Ciapina L.P."/>
            <person name="Cicarelli R.M.B."/>
            <person name="Coutinho L.L."/>
            <person name="Cursino-Santos J.R."/>
            <person name="El-Dorry H."/>
            <person name="Faria J.B."/>
            <person name="Ferreira A.J.S."/>
            <person name="Ferreira R.C.C."/>
            <person name="Ferro M.I.T."/>
            <person name="Formighieri E.F."/>
            <person name="Franco M.C."/>
            <person name="Greggio C.C."/>
            <person name="Gruber A."/>
            <person name="Katsuyama A.M."/>
            <person name="Kishi L.T."/>
            <person name="Leite R.P."/>
            <person name="Lemos E.G.M."/>
            <person name="Lemos M.V.F."/>
            <person name="Locali E.C."/>
            <person name="Machado M.A."/>
            <person name="Madeira A.M.B.N."/>
            <person name="Martinez-Rossi N.M."/>
            <person name="Martins E.C."/>
            <person name="Meidanis J."/>
            <person name="Menck C.F.M."/>
            <person name="Miyaki C.Y."/>
            <person name="Moon D.H."/>
            <person name="Moreira L.M."/>
            <person name="Novo M.T.M."/>
            <person name="Okura V.K."/>
            <person name="Oliveira M.C."/>
            <person name="Oliveira V.R."/>
            <person name="Pereira H.A."/>
            <person name="Rossi A."/>
            <person name="Sena J.A.D."/>
            <person name="Silva C."/>
            <person name="de Souza R.F."/>
            <person name="Spinola L.A.F."/>
            <person name="Takita M.A."/>
            <person name="Tamura R.E."/>
            <person name="Teixeira E.C."/>
            <person name="Tezza R.I.D."/>
            <person name="Trindade dos Santos M."/>
            <person name="Truffi D."/>
            <person name="Tsai S.M."/>
            <person name="White F.F."/>
            <person name="Setubal J.C."/>
            <person name="Kitajima J.P."/>
        </authorList>
    </citation>
    <scope>NUCLEOTIDE SEQUENCE [LARGE SCALE GENOMIC DNA]</scope>
    <source>
        <strain>306</strain>
    </source>
</reference>
<gene>
    <name evidence="1" type="primary">betA</name>
    <name type="ordered locus">XAC0718</name>
</gene>
<dbReference type="EC" id="1.1.99.1" evidence="1"/>
<dbReference type="EC" id="1.2.1.8" evidence="1"/>
<dbReference type="EMBL" id="AE008923">
    <property type="protein sequence ID" value="AAM35607.1"/>
    <property type="molecule type" value="Genomic_DNA"/>
</dbReference>
<dbReference type="RefSeq" id="WP_011050499.1">
    <property type="nucleotide sequence ID" value="NC_003919.1"/>
</dbReference>
<dbReference type="SMR" id="Q8PPG8"/>
<dbReference type="GeneID" id="66909915"/>
<dbReference type="KEGG" id="xac:XAC0718"/>
<dbReference type="eggNOG" id="COG2303">
    <property type="taxonomic scope" value="Bacteria"/>
</dbReference>
<dbReference type="HOGENOM" id="CLU_002865_7_1_6"/>
<dbReference type="UniPathway" id="UPA00529">
    <property type="reaction ID" value="UER00385"/>
</dbReference>
<dbReference type="Proteomes" id="UP000000576">
    <property type="component" value="Chromosome"/>
</dbReference>
<dbReference type="GO" id="GO:0016020">
    <property type="term" value="C:membrane"/>
    <property type="evidence" value="ECO:0007669"/>
    <property type="project" value="TreeGrafter"/>
</dbReference>
<dbReference type="GO" id="GO:0008802">
    <property type="term" value="F:betaine-aldehyde dehydrogenase (NAD+) activity"/>
    <property type="evidence" value="ECO:0007669"/>
    <property type="project" value="UniProtKB-EC"/>
</dbReference>
<dbReference type="GO" id="GO:0008812">
    <property type="term" value="F:choline dehydrogenase activity"/>
    <property type="evidence" value="ECO:0007669"/>
    <property type="project" value="UniProtKB-UniRule"/>
</dbReference>
<dbReference type="GO" id="GO:0050660">
    <property type="term" value="F:flavin adenine dinucleotide binding"/>
    <property type="evidence" value="ECO:0007669"/>
    <property type="project" value="InterPro"/>
</dbReference>
<dbReference type="GO" id="GO:0019285">
    <property type="term" value="P:glycine betaine biosynthetic process from choline"/>
    <property type="evidence" value="ECO:0007669"/>
    <property type="project" value="UniProtKB-UniRule"/>
</dbReference>
<dbReference type="Gene3D" id="3.50.50.60">
    <property type="entry name" value="FAD/NAD(P)-binding domain"/>
    <property type="match status" value="1"/>
</dbReference>
<dbReference type="Gene3D" id="3.30.560.10">
    <property type="entry name" value="Glucose Oxidase, domain 3"/>
    <property type="match status" value="1"/>
</dbReference>
<dbReference type="HAMAP" id="MF_00750">
    <property type="entry name" value="Choline_dehydrogen"/>
    <property type="match status" value="1"/>
</dbReference>
<dbReference type="InterPro" id="IPR011533">
    <property type="entry name" value="BetA"/>
</dbReference>
<dbReference type="InterPro" id="IPR036188">
    <property type="entry name" value="FAD/NAD-bd_sf"/>
</dbReference>
<dbReference type="InterPro" id="IPR012132">
    <property type="entry name" value="GMC_OxRdtase"/>
</dbReference>
<dbReference type="InterPro" id="IPR000172">
    <property type="entry name" value="GMC_OxRdtase_N"/>
</dbReference>
<dbReference type="InterPro" id="IPR007867">
    <property type="entry name" value="GMC_OxRtase_C"/>
</dbReference>
<dbReference type="NCBIfam" id="TIGR01810">
    <property type="entry name" value="betA"/>
    <property type="match status" value="1"/>
</dbReference>
<dbReference type="NCBIfam" id="NF002550">
    <property type="entry name" value="PRK02106.1"/>
    <property type="match status" value="1"/>
</dbReference>
<dbReference type="PANTHER" id="PTHR11552:SF147">
    <property type="entry name" value="CHOLINE DEHYDROGENASE, MITOCHONDRIAL"/>
    <property type="match status" value="1"/>
</dbReference>
<dbReference type="PANTHER" id="PTHR11552">
    <property type="entry name" value="GLUCOSE-METHANOL-CHOLINE GMC OXIDOREDUCTASE"/>
    <property type="match status" value="1"/>
</dbReference>
<dbReference type="Pfam" id="PF05199">
    <property type="entry name" value="GMC_oxred_C"/>
    <property type="match status" value="1"/>
</dbReference>
<dbReference type="Pfam" id="PF00732">
    <property type="entry name" value="GMC_oxred_N"/>
    <property type="match status" value="1"/>
</dbReference>
<dbReference type="PIRSF" id="PIRSF000137">
    <property type="entry name" value="Alcohol_oxidase"/>
    <property type="match status" value="1"/>
</dbReference>
<dbReference type="SUPFAM" id="SSF54373">
    <property type="entry name" value="FAD-linked reductases, C-terminal domain"/>
    <property type="match status" value="1"/>
</dbReference>
<dbReference type="SUPFAM" id="SSF51905">
    <property type="entry name" value="FAD/NAD(P)-binding domain"/>
    <property type="match status" value="1"/>
</dbReference>
<dbReference type="PROSITE" id="PS00623">
    <property type="entry name" value="GMC_OXRED_1"/>
    <property type="match status" value="1"/>
</dbReference>
<dbReference type="PROSITE" id="PS00624">
    <property type="entry name" value="GMC_OXRED_2"/>
    <property type="match status" value="1"/>
</dbReference>
<sequence>MQREYDYIIIGAGSAGNVLAARLTEDPGVTVLLLEAGGPDYRVDFRTQMPAALAFPLQGRRYNWAYETEPEPYMDNRRMECGRGKGLGGSSLINGMCYIRGNALDFDHWAKRPGLEDWSYRDVLPYFRKAETRDIGANDYHGGDGPVSVATPKNDNNVLFHAMVEAGVQAGYPRTGDLNGYQQEGFGPMDRTVTPRGRRASTARGYLDMAKPRDGLHIVTHATTDRILFAGKRAIGVHYLVGNSSEGIDAHARREVLVCAGAIASPQLLQRSGVGAPDLLRALDVQLVHDLPGVGQNLQDHLEVYIQYACTKPVSLYPALQWWNQPAIGAQWLFAGTGTGASNQFEAGGFIRTREEFDWPNIQYHFLPVAINYNGSNAVKEHGFQAHVGSMRTPSRGRVHAKSRDPRQHPSILFNYQSTDQDWQEFRDAIRITREIIAQPALDAYRGREISPSADCKTDAELDAFVRSRAETAYHPSCSCAMGTDAMAVVDGQGRVHGMEGLRVIDASIMPRIITGNLNATTIMIAEKIADRVRGRTPLPRSTADYYIAGDAPVRG</sequence>
<keyword id="KW-0274">FAD</keyword>
<keyword id="KW-0285">Flavoprotein</keyword>
<keyword id="KW-0520">NAD</keyword>
<keyword id="KW-0560">Oxidoreductase</keyword>
<name>BETA_XANAC</name>
<comment type="function">
    <text evidence="1">Involved in the biosynthesis of the osmoprotectant glycine betaine. Catalyzes the oxidation of choline to betaine aldehyde and betaine aldehyde to glycine betaine at the same rate.</text>
</comment>
<comment type="catalytic activity">
    <reaction evidence="1">
        <text>choline + A = betaine aldehyde + AH2</text>
        <dbReference type="Rhea" id="RHEA:17433"/>
        <dbReference type="ChEBI" id="CHEBI:13193"/>
        <dbReference type="ChEBI" id="CHEBI:15354"/>
        <dbReference type="ChEBI" id="CHEBI:15710"/>
        <dbReference type="ChEBI" id="CHEBI:17499"/>
        <dbReference type="EC" id="1.1.99.1"/>
    </reaction>
</comment>
<comment type="catalytic activity">
    <reaction evidence="1">
        <text>betaine aldehyde + NAD(+) + H2O = glycine betaine + NADH + 2 H(+)</text>
        <dbReference type="Rhea" id="RHEA:15305"/>
        <dbReference type="ChEBI" id="CHEBI:15377"/>
        <dbReference type="ChEBI" id="CHEBI:15378"/>
        <dbReference type="ChEBI" id="CHEBI:15710"/>
        <dbReference type="ChEBI" id="CHEBI:17750"/>
        <dbReference type="ChEBI" id="CHEBI:57540"/>
        <dbReference type="ChEBI" id="CHEBI:57945"/>
        <dbReference type="EC" id="1.2.1.8"/>
    </reaction>
</comment>
<comment type="cofactor">
    <cofactor evidence="1">
        <name>FAD</name>
        <dbReference type="ChEBI" id="CHEBI:57692"/>
    </cofactor>
</comment>
<comment type="pathway">
    <text evidence="1">Amine and polyamine biosynthesis; betaine biosynthesis via choline pathway; betaine aldehyde from choline (cytochrome c reductase route): step 1/1.</text>
</comment>
<comment type="similarity">
    <text evidence="1">Belongs to the GMC oxidoreductase family.</text>
</comment>
<feature type="chain" id="PRO_0000205608" description="Oxygen-dependent choline dehydrogenase">
    <location>
        <begin position="1"/>
        <end position="556"/>
    </location>
</feature>
<feature type="active site" description="Proton acceptor" evidence="1">
    <location>
        <position position="475"/>
    </location>
</feature>
<feature type="binding site" evidence="1">
    <location>
        <begin position="6"/>
        <end position="35"/>
    </location>
    <ligand>
        <name>FAD</name>
        <dbReference type="ChEBI" id="CHEBI:57692"/>
    </ligand>
</feature>
<accession>Q8PPG8</accession>
<protein>
    <recommendedName>
        <fullName evidence="1">Oxygen-dependent choline dehydrogenase</fullName>
        <shortName evidence="1">CDH</shortName>
        <shortName evidence="1">CHD</shortName>
        <ecNumber evidence="1">1.1.99.1</ecNumber>
    </recommendedName>
    <alternativeName>
        <fullName evidence="1">Betaine aldehyde dehydrogenase</fullName>
        <shortName evidence="1">BADH</shortName>
        <ecNumber evidence="1">1.2.1.8</ecNumber>
    </alternativeName>
</protein>
<evidence type="ECO:0000255" key="1">
    <source>
        <dbReference type="HAMAP-Rule" id="MF_00750"/>
    </source>
</evidence>
<proteinExistence type="inferred from homology"/>